<dbReference type="EC" id="2.3.1.117" evidence="1"/>
<dbReference type="EMBL" id="CP000031">
    <property type="protein sequence ID" value="AAV96564.1"/>
    <property type="molecule type" value="Genomic_DNA"/>
</dbReference>
<dbReference type="RefSeq" id="WP_011049020.1">
    <property type="nucleotide sequence ID" value="NC_003911.12"/>
</dbReference>
<dbReference type="SMR" id="Q5LN75"/>
<dbReference type="STRING" id="246200.SPO3337"/>
<dbReference type="PaxDb" id="246200-SPO3337"/>
<dbReference type="KEGG" id="sil:SPO3337"/>
<dbReference type="eggNOG" id="COG2171">
    <property type="taxonomic scope" value="Bacteria"/>
</dbReference>
<dbReference type="HOGENOM" id="CLU_050859_0_1_5"/>
<dbReference type="OrthoDB" id="9775362at2"/>
<dbReference type="UniPathway" id="UPA00034">
    <property type="reaction ID" value="UER00019"/>
</dbReference>
<dbReference type="Proteomes" id="UP000001023">
    <property type="component" value="Chromosome"/>
</dbReference>
<dbReference type="GO" id="GO:0005737">
    <property type="term" value="C:cytoplasm"/>
    <property type="evidence" value="ECO:0007669"/>
    <property type="project" value="UniProtKB-SubCell"/>
</dbReference>
<dbReference type="GO" id="GO:0008666">
    <property type="term" value="F:2,3,4,5-tetrahydropyridine-2,6-dicarboxylate N-succinyltransferase activity"/>
    <property type="evidence" value="ECO:0007669"/>
    <property type="project" value="UniProtKB-UniRule"/>
</dbReference>
<dbReference type="GO" id="GO:0016779">
    <property type="term" value="F:nucleotidyltransferase activity"/>
    <property type="evidence" value="ECO:0007669"/>
    <property type="project" value="TreeGrafter"/>
</dbReference>
<dbReference type="GO" id="GO:0019877">
    <property type="term" value="P:diaminopimelate biosynthetic process"/>
    <property type="evidence" value="ECO:0007669"/>
    <property type="project" value="UniProtKB-UniRule"/>
</dbReference>
<dbReference type="GO" id="GO:0009089">
    <property type="term" value="P:lysine biosynthetic process via diaminopimelate"/>
    <property type="evidence" value="ECO:0007669"/>
    <property type="project" value="UniProtKB-UniRule"/>
</dbReference>
<dbReference type="CDD" id="cd03350">
    <property type="entry name" value="LbH_THP_succinylT"/>
    <property type="match status" value="1"/>
</dbReference>
<dbReference type="Gene3D" id="2.160.10.10">
    <property type="entry name" value="Hexapeptide repeat proteins"/>
    <property type="match status" value="1"/>
</dbReference>
<dbReference type="Gene3D" id="1.10.166.10">
    <property type="entry name" value="Tetrahydrodipicolinate-N-succinyltransferase, N-terminal domain"/>
    <property type="match status" value="1"/>
</dbReference>
<dbReference type="HAMAP" id="MF_00811">
    <property type="entry name" value="DapD"/>
    <property type="match status" value="1"/>
</dbReference>
<dbReference type="InterPro" id="IPR005664">
    <property type="entry name" value="DapD_Trfase_Hexpep_rpt_fam"/>
</dbReference>
<dbReference type="InterPro" id="IPR001451">
    <property type="entry name" value="Hexapep"/>
</dbReference>
<dbReference type="InterPro" id="IPR018357">
    <property type="entry name" value="Hexapep_transf_CS"/>
</dbReference>
<dbReference type="InterPro" id="IPR023180">
    <property type="entry name" value="THP_succinylTrfase_dom1"/>
</dbReference>
<dbReference type="InterPro" id="IPR037133">
    <property type="entry name" value="THP_succinylTrfase_N_sf"/>
</dbReference>
<dbReference type="InterPro" id="IPR011004">
    <property type="entry name" value="Trimer_LpxA-like_sf"/>
</dbReference>
<dbReference type="NCBIfam" id="TIGR00965">
    <property type="entry name" value="dapD"/>
    <property type="match status" value="1"/>
</dbReference>
<dbReference type="NCBIfam" id="NF008808">
    <property type="entry name" value="PRK11830.1"/>
    <property type="match status" value="1"/>
</dbReference>
<dbReference type="PANTHER" id="PTHR19136:SF52">
    <property type="entry name" value="2,3,4,5-TETRAHYDROPYRIDINE-2,6-DICARBOXYLATE N-SUCCINYLTRANSFERASE"/>
    <property type="match status" value="1"/>
</dbReference>
<dbReference type="PANTHER" id="PTHR19136">
    <property type="entry name" value="MOLYBDENUM COFACTOR GUANYLYLTRANSFERASE"/>
    <property type="match status" value="1"/>
</dbReference>
<dbReference type="Pfam" id="PF14602">
    <property type="entry name" value="Hexapep_2"/>
    <property type="match status" value="1"/>
</dbReference>
<dbReference type="Pfam" id="PF14805">
    <property type="entry name" value="THDPS_N_2"/>
    <property type="match status" value="1"/>
</dbReference>
<dbReference type="SUPFAM" id="SSF51161">
    <property type="entry name" value="Trimeric LpxA-like enzymes"/>
    <property type="match status" value="1"/>
</dbReference>
<dbReference type="PROSITE" id="PS00101">
    <property type="entry name" value="HEXAPEP_TRANSFERASES"/>
    <property type="match status" value="1"/>
</dbReference>
<comment type="catalytic activity">
    <reaction evidence="1">
        <text>(S)-2,3,4,5-tetrahydrodipicolinate + succinyl-CoA + H2O = (S)-2-succinylamino-6-oxoheptanedioate + CoA</text>
        <dbReference type="Rhea" id="RHEA:17325"/>
        <dbReference type="ChEBI" id="CHEBI:15377"/>
        <dbReference type="ChEBI" id="CHEBI:15685"/>
        <dbReference type="ChEBI" id="CHEBI:16845"/>
        <dbReference type="ChEBI" id="CHEBI:57287"/>
        <dbReference type="ChEBI" id="CHEBI:57292"/>
        <dbReference type="EC" id="2.3.1.117"/>
    </reaction>
</comment>
<comment type="pathway">
    <text evidence="1">Amino-acid biosynthesis; L-lysine biosynthesis via DAP pathway; LL-2,6-diaminopimelate from (S)-tetrahydrodipicolinate (succinylase route): step 1/3.</text>
</comment>
<comment type="subunit">
    <text evidence="1">Homotrimer.</text>
</comment>
<comment type="subcellular location">
    <subcellularLocation>
        <location evidence="1">Cytoplasm</location>
    </subcellularLocation>
</comment>
<comment type="similarity">
    <text evidence="1">Belongs to the transferase hexapeptide repeat family.</text>
</comment>
<keyword id="KW-0012">Acyltransferase</keyword>
<keyword id="KW-0028">Amino-acid biosynthesis</keyword>
<keyword id="KW-0963">Cytoplasm</keyword>
<keyword id="KW-0220">Diaminopimelate biosynthesis</keyword>
<keyword id="KW-0457">Lysine biosynthesis</keyword>
<keyword id="KW-1185">Reference proteome</keyword>
<keyword id="KW-0677">Repeat</keyword>
<keyword id="KW-0808">Transferase</keyword>
<name>DAPD_RUEPO</name>
<sequence>MSNQELEAAIEAAWDARDSITPATTGATREAIEETLAALDGGGLRVAEKQADGSWHVNQWAKKAVLLGFRIKDMEIQSGGPQGGGWWDKVDSKFAGWGESQWKAAGFRAVPNCVVRKSAYIAPGVVLMPSFVNLGAYVDSGTMVDTWATVGSCAQIGRNVHLSGGVGIGGVLEPMQAGPTIIEDNCFIGARSEVVEGVIVREGAVLGMGVYIGQSTKIVDRETGEVMYGEVPPYSVVVSGSMPSTGGVSLYCAVIVKRVDERTRSKTGINELLRD</sequence>
<feature type="chain" id="PRO_0000196972" description="2,3,4,5-tetrahydropyridine-2,6-dicarboxylate N-succinyltransferase">
    <location>
        <begin position="1"/>
        <end position="275"/>
    </location>
</feature>
<feature type="binding site" evidence="1">
    <location>
        <position position="108"/>
    </location>
    <ligand>
        <name>substrate</name>
    </ligand>
</feature>
<feature type="binding site" evidence="1">
    <location>
        <position position="145"/>
    </location>
    <ligand>
        <name>substrate</name>
    </ligand>
</feature>
<gene>
    <name evidence="1" type="primary">dapD</name>
    <name type="ordered locus">SPO3337</name>
</gene>
<accession>Q5LN75</accession>
<reference key="1">
    <citation type="journal article" date="2004" name="Nature">
        <title>Genome sequence of Silicibacter pomeroyi reveals adaptations to the marine environment.</title>
        <authorList>
            <person name="Moran M.A."/>
            <person name="Buchan A."/>
            <person name="Gonzalez J.M."/>
            <person name="Heidelberg J.F."/>
            <person name="Whitman W.B."/>
            <person name="Kiene R.P."/>
            <person name="Henriksen J.R."/>
            <person name="King G.M."/>
            <person name="Belas R."/>
            <person name="Fuqua C."/>
            <person name="Brinkac L.M."/>
            <person name="Lewis M."/>
            <person name="Johri S."/>
            <person name="Weaver B."/>
            <person name="Pai G."/>
            <person name="Eisen J.A."/>
            <person name="Rahe E."/>
            <person name="Sheldon W.M."/>
            <person name="Ye W."/>
            <person name="Miller T.R."/>
            <person name="Carlton J."/>
            <person name="Rasko D.A."/>
            <person name="Paulsen I.T."/>
            <person name="Ren Q."/>
            <person name="Daugherty S.C."/>
            <person name="DeBoy R.T."/>
            <person name="Dodson R.J."/>
            <person name="Durkin A.S."/>
            <person name="Madupu R."/>
            <person name="Nelson W.C."/>
            <person name="Sullivan S.A."/>
            <person name="Rosovitz M.J."/>
            <person name="Haft D.H."/>
            <person name="Selengut J."/>
            <person name="Ward N."/>
        </authorList>
    </citation>
    <scope>NUCLEOTIDE SEQUENCE [LARGE SCALE GENOMIC DNA]</scope>
    <source>
        <strain>ATCC 700808 / DSM 15171 / DSS-3</strain>
    </source>
</reference>
<reference key="2">
    <citation type="journal article" date="2014" name="Stand. Genomic Sci.">
        <title>An updated genome annotation for the model marine bacterium Ruegeria pomeroyi DSS-3.</title>
        <authorList>
            <person name="Rivers A.R."/>
            <person name="Smith C.B."/>
            <person name="Moran M.A."/>
        </authorList>
    </citation>
    <scope>GENOME REANNOTATION</scope>
    <source>
        <strain>ATCC 700808 / DSM 15171 / DSS-3</strain>
    </source>
</reference>
<proteinExistence type="inferred from homology"/>
<organism>
    <name type="scientific">Ruegeria pomeroyi (strain ATCC 700808 / DSM 15171 / DSS-3)</name>
    <name type="common">Silicibacter pomeroyi</name>
    <dbReference type="NCBI Taxonomy" id="246200"/>
    <lineage>
        <taxon>Bacteria</taxon>
        <taxon>Pseudomonadati</taxon>
        <taxon>Pseudomonadota</taxon>
        <taxon>Alphaproteobacteria</taxon>
        <taxon>Rhodobacterales</taxon>
        <taxon>Roseobacteraceae</taxon>
        <taxon>Ruegeria</taxon>
    </lineage>
</organism>
<protein>
    <recommendedName>
        <fullName evidence="1">2,3,4,5-tetrahydropyridine-2,6-dicarboxylate N-succinyltransferase</fullName>
        <ecNumber evidence="1">2.3.1.117</ecNumber>
    </recommendedName>
    <alternativeName>
        <fullName evidence="1">Tetrahydrodipicolinate N-succinyltransferase</fullName>
        <shortName evidence="1">THDP succinyltransferase</shortName>
        <shortName evidence="1">THP succinyltransferase</shortName>
        <shortName evidence="1">Tetrahydropicolinate succinylase</shortName>
    </alternativeName>
</protein>
<evidence type="ECO:0000255" key="1">
    <source>
        <dbReference type="HAMAP-Rule" id="MF_00811"/>
    </source>
</evidence>